<name>MIAA_TOLAT</name>
<keyword id="KW-0067">ATP-binding</keyword>
<keyword id="KW-0460">Magnesium</keyword>
<keyword id="KW-0547">Nucleotide-binding</keyword>
<keyword id="KW-1185">Reference proteome</keyword>
<keyword id="KW-0808">Transferase</keyword>
<keyword id="KW-0819">tRNA processing</keyword>
<proteinExistence type="inferred from homology"/>
<protein>
    <recommendedName>
        <fullName evidence="1">tRNA dimethylallyltransferase</fullName>
        <ecNumber evidence="1">2.5.1.75</ecNumber>
    </recommendedName>
    <alternativeName>
        <fullName evidence="1">Dimethylallyl diphosphate:tRNA dimethylallyltransferase</fullName>
        <shortName evidence="1">DMAPP:tRNA dimethylallyltransferase</shortName>
        <shortName evidence="1">DMATase</shortName>
    </alternativeName>
    <alternativeName>
        <fullName evidence="1">Isopentenyl-diphosphate:tRNA isopentenyltransferase</fullName>
        <shortName evidence="1">IPP transferase</shortName>
        <shortName evidence="1">IPPT</shortName>
        <shortName evidence="1">IPTase</shortName>
    </alternativeName>
</protein>
<accession>C4L9N0</accession>
<gene>
    <name evidence="1" type="primary">miaA</name>
    <name type="ordered locus">Tola_2386</name>
</gene>
<dbReference type="EC" id="2.5.1.75" evidence="1"/>
<dbReference type="EMBL" id="CP001616">
    <property type="protein sequence ID" value="ACQ93983.1"/>
    <property type="molecule type" value="Genomic_DNA"/>
</dbReference>
<dbReference type="SMR" id="C4L9N0"/>
<dbReference type="STRING" id="595494.Tola_2386"/>
<dbReference type="KEGG" id="tau:Tola_2386"/>
<dbReference type="eggNOG" id="COG0324">
    <property type="taxonomic scope" value="Bacteria"/>
</dbReference>
<dbReference type="HOGENOM" id="CLU_032616_0_0_6"/>
<dbReference type="OrthoDB" id="9776390at2"/>
<dbReference type="Proteomes" id="UP000009073">
    <property type="component" value="Chromosome"/>
</dbReference>
<dbReference type="GO" id="GO:0005524">
    <property type="term" value="F:ATP binding"/>
    <property type="evidence" value="ECO:0007669"/>
    <property type="project" value="UniProtKB-UniRule"/>
</dbReference>
<dbReference type="GO" id="GO:0052381">
    <property type="term" value="F:tRNA dimethylallyltransferase activity"/>
    <property type="evidence" value="ECO:0007669"/>
    <property type="project" value="UniProtKB-UniRule"/>
</dbReference>
<dbReference type="GO" id="GO:0006400">
    <property type="term" value="P:tRNA modification"/>
    <property type="evidence" value="ECO:0007669"/>
    <property type="project" value="TreeGrafter"/>
</dbReference>
<dbReference type="FunFam" id="1.10.20.140:FF:000001">
    <property type="entry name" value="tRNA dimethylallyltransferase"/>
    <property type="match status" value="1"/>
</dbReference>
<dbReference type="Gene3D" id="1.10.20.140">
    <property type="match status" value="1"/>
</dbReference>
<dbReference type="Gene3D" id="3.40.50.300">
    <property type="entry name" value="P-loop containing nucleotide triphosphate hydrolases"/>
    <property type="match status" value="1"/>
</dbReference>
<dbReference type="HAMAP" id="MF_00185">
    <property type="entry name" value="IPP_trans"/>
    <property type="match status" value="1"/>
</dbReference>
<dbReference type="InterPro" id="IPR039657">
    <property type="entry name" value="Dimethylallyltransferase"/>
</dbReference>
<dbReference type="InterPro" id="IPR018022">
    <property type="entry name" value="IPT"/>
</dbReference>
<dbReference type="InterPro" id="IPR027417">
    <property type="entry name" value="P-loop_NTPase"/>
</dbReference>
<dbReference type="NCBIfam" id="TIGR00174">
    <property type="entry name" value="miaA"/>
    <property type="match status" value="1"/>
</dbReference>
<dbReference type="PANTHER" id="PTHR11088">
    <property type="entry name" value="TRNA DIMETHYLALLYLTRANSFERASE"/>
    <property type="match status" value="1"/>
</dbReference>
<dbReference type="PANTHER" id="PTHR11088:SF60">
    <property type="entry name" value="TRNA DIMETHYLALLYLTRANSFERASE"/>
    <property type="match status" value="1"/>
</dbReference>
<dbReference type="Pfam" id="PF01715">
    <property type="entry name" value="IPPT"/>
    <property type="match status" value="1"/>
</dbReference>
<dbReference type="SUPFAM" id="SSF52540">
    <property type="entry name" value="P-loop containing nucleoside triphosphate hydrolases"/>
    <property type="match status" value="1"/>
</dbReference>
<organism>
    <name type="scientific">Tolumonas auensis (strain DSM 9187 / NBRC 110442 / TA 4)</name>
    <dbReference type="NCBI Taxonomy" id="595494"/>
    <lineage>
        <taxon>Bacteria</taxon>
        <taxon>Pseudomonadati</taxon>
        <taxon>Pseudomonadota</taxon>
        <taxon>Gammaproteobacteria</taxon>
        <taxon>Aeromonadales</taxon>
        <taxon>Aeromonadaceae</taxon>
        <taxon>Tolumonas</taxon>
    </lineage>
</organism>
<feature type="chain" id="PRO_1000203944" description="tRNA dimethylallyltransferase">
    <location>
        <begin position="1"/>
        <end position="310"/>
    </location>
</feature>
<feature type="region of interest" description="Interaction with substrate tRNA" evidence="1">
    <location>
        <begin position="39"/>
        <end position="42"/>
    </location>
</feature>
<feature type="region of interest" description="Interaction with substrate tRNA" evidence="1">
    <location>
        <begin position="163"/>
        <end position="167"/>
    </location>
</feature>
<feature type="region of interest" description="Interaction with substrate tRNA" evidence="1">
    <location>
        <begin position="244"/>
        <end position="249"/>
    </location>
</feature>
<feature type="binding site" evidence="1">
    <location>
        <begin position="14"/>
        <end position="21"/>
    </location>
    <ligand>
        <name>ATP</name>
        <dbReference type="ChEBI" id="CHEBI:30616"/>
    </ligand>
</feature>
<feature type="binding site" evidence="1">
    <location>
        <begin position="16"/>
        <end position="21"/>
    </location>
    <ligand>
        <name>substrate</name>
    </ligand>
</feature>
<feature type="site" description="Interaction with substrate tRNA" evidence="1">
    <location>
        <position position="105"/>
    </location>
</feature>
<feature type="site" description="Interaction with substrate tRNA" evidence="1">
    <location>
        <position position="127"/>
    </location>
</feature>
<sequence length="310" mass="34785">MTDPRHPPVIFLMGPTASGKTALAIELVKRLPCDIISVDSALIYRGMDIGTAKPTAEELAQAPHRLLDIRDPFQTYSAADFRQDALREIETIVAQGRIPLLVGGTMLYYKALLEGLSPLPAADPLIRQAIEAEASLSGWEALHAQLQSIDPVAAARIHPNDPQRLSRALEVYRISGQTLTELTQTKGEQLPYRTLQFAIAPTDRELLRQRIAERFHLMLSQGFEQEVRALYDRGDLNADLPSIRCVGYRQMWEYLDGQISYDEMVYRGIVATCQLAKRQMTWLRSWQNVTWLETGAINNADIICHSLTSA</sequence>
<reference key="1">
    <citation type="submission" date="2009-05" db="EMBL/GenBank/DDBJ databases">
        <title>Complete sequence of Tolumonas auensis DSM 9187.</title>
        <authorList>
            <consortium name="US DOE Joint Genome Institute"/>
            <person name="Lucas S."/>
            <person name="Copeland A."/>
            <person name="Lapidus A."/>
            <person name="Glavina del Rio T."/>
            <person name="Tice H."/>
            <person name="Bruce D."/>
            <person name="Goodwin L."/>
            <person name="Pitluck S."/>
            <person name="Chertkov O."/>
            <person name="Brettin T."/>
            <person name="Detter J.C."/>
            <person name="Han C."/>
            <person name="Larimer F."/>
            <person name="Land M."/>
            <person name="Hauser L."/>
            <person name="Kyrpides N."/>
            <person name="Mikhailova N."/>
            <person name="Spring S."/>
            <person name="Beller H."/>
        </authorList>
    </citation>
    <scope>NUCLEOTIDE SEQUENCE [LARGE SCALE GENOMIC DNA]</scope>
    <source>
        <strain>DSM 9187 / NBRC 110442 / TA 4</strain>
    </source>
</reference>
<comment type="function">
    <text evidence="1">Catalyzes the transfer of a dimethylallyl group onto the adenine at position 37 in tRNAs that read codons beginning with uridine, leading to the formation of N6-(dimethylallyl)adenosine (i(6)A).</text>
</comment>
<comment type="catalytic activity">
    <reaction evidence="1">
        <text>adenosine(37) in tRNA + dimethylallyl diphosphate = N(6)-dimethylallyladenosine(37) in tRNA + diphosphate</text>
        <dbReference type="Rhea" id="RHEA:26482"/>
        <dbReference type="Rhea" id="RHEA-COMP:10162"/>
        <dbReference type="Rhea" id="RHEA-COMP:10375"/>
        <dbReference type="ChEBI" id="CHEBI:33019"/>
        <dbReference type="ChEBI" id="CHEBI:57623"/>
        <dbReference type="ChEBI" id="CHEBI:74411"/>
        <dbReference type="ChEBI" id="CHEBI:74415"/>
        <dbReference type="EC" id="2.5.1.75"/>
    </reaction>
</comment>
<comment type="cofactor">
    <cofactor evidence="1">
        <name>Mg(2+)</name>
        <dbReference type="ChEBI" id="CHEBI:18420"/>
    </cofactor>
</comment>
<comment type="subunit">
    <text evidence="1">Monomer.</text>
</comment>
<comment type="similarity">
    <text evidence="1">Belongs to the IPP transferase family.</text>
</comment>
<evidence type="ECO:0000255" key="1">
    <source>
        <dbReference type="HAMAP-Rule" id="MF_00185"/>
    </source>
</evidence>